<organism>
    <name type="scientific">Saccharolobus islandicus (strain M.16.4 / Kamchatka #3)</name>
    <name type="common">Sulfolobus islandicus</name>
    <dbReference type="NCBI Taxonomy" id="426118"/>
    <lineage>
        <taxon>Archaea</taxon>
        <taxon>Thermoproteota</taxon>
        <taxon>Thermoprotei</taxon>
        <taxon>Sulfolobales</taxon>
        <taxon>Sulfolobaceae</taxon>
        <taxon>Saccharolobus</taxon>
    </lineage>
</organism>
<comment type="function">
    <text evidence="1">Forms part of the ribosomal stalk, playing a central role in the interaction of the ribosome with GTP-bound translation factors.</text>
</comment>
<comment type="subunit">
    <text evidence="1">Part of the 50S ribosomal subunit. Forms part of the ribosomal stalk which helps the ribosome interact with GTP-bound translation factors. Forms a heptameric L10(L12)2(L12)2(L12)2 complex, where L10 forms an elongated spine to which the L12 dimers bind in a sequential fashion.</text>
</comment>
<comment type="similarity">
    <text evidence="1">Belongs to the universal ribosomal protein uL10 family.</text>
</comment>
<reference key="1">
    <citation type="journal article" date="2009" name="Proc. Natl. Acad. Sci. U.S.A.">
        <title>Biogeography of the Sulfolobus islandicus pan-genome.</title>
        <authorList>
            <person name="Reno M.L."/>
            <person name="Held N.L."/>
            <person name="Fields C.J."/>
            <person name="Burke P.V."/>
            <person name="Whitaker R.J."/>
        </authorList>
    </citation>
    <scope>NUCLEOTIDE SEQUENCE [LARGE SCALE GENOMIC DNA]</scope>
    <source>
        <strain>M.16.4 / Kamchatka #3</strain>
    </source>
</reference>
<gene>
    <name evidence="1" type="primary">rpl10</name>
    <name evidence="1" type="synonym">rplP0</name>
    <name type="ordered locus">M164_1810</name>
</gene>
<feature type="chain" id="PRO_1000204813" description="Large ribosomal subunit protein uL10">
    <location>
        <begin position="1"/>
        <end position="338"/>
    </location>
</feature>
<feature type="region of interest" description="Disordered" evidence="2">
    <location>
        <begin position="297"/>
        <end position="338"/>
    </location>
</feature>
<feature type="compositionally biased region" description="Low complexity" evidence="2">
    <location>
        <begin position="298"/>
        <end position="308"/>
    </location>
</feature>
<feature type="compositionally biased region" description="Basic and acidic residues" evidence="2">
    <location>
        <begin position="309"/>
        <end position="325"/>
    </location>
</feature>
<accession>C4KIJ9</accession>
<evidence type="ECO:0000255" key="1">
    <source>
        <dbReference type="HAMAP-Rule" id="MF_00280"/>
    </source>
</evidence>
<evidence type="ECO:0000256" key="2">
    <source>
        <dbReference type="SAM" id="MobiDB-lite"/>
    </source>
</evidence>
<evidence type="ECO:0000305" key="3"/>
<name>RL10_SACI6</name>
<keyword id="KW-0687">Ribonucleoprotein</keyword>
<keyword id="KW-0689">Ribosomal protein</keyword>
<keyword id="KW-0694">RNA-binding</keyword>
<keyword id="KW-0699">rRNA-binding</keyword>
<proteinExistence type="inferred from homology"/>
<sequence>MKRLALALKQKKVASWKLEEVKELTELIKNSNTILIGSLEGFPADKLHEIRKKLRGKAIIKVTKNTLFKIAAKNAGINIEKLEQYLTGPNVFIFTKDNPFLTNMFFENYKLRRYAMPGDKAEEEVIIPAGDTGMPAGPILSVFGKLKVQTKVQDGKVHVVKDTVVAKPGDVIPTEALPILQKLGIMPVYVKLKIKVAYHEGLVIPAENLKLNLEGYRSNIAEAYRNAFTLAVEIAYPVPDVLKFTINKIFKNAITLASEIGYLTPESAQAVISKAVAKAYALATAISGKVDLGVKLPSAQQTQTQQSTAEEKKEEKKEEEKKGPSEEEIGSGLASLFG</sequence>
<protein>
    <recommendedName>
        <fullName evidence="1">Large ribosomal subunit protein uL10</fullName>
    </recommendedName>
    <alternativeName>
        <fullName evidence="3">50S ribosomal protein L10</fullName>
    </alternativeName>
    <alternativeName>
        <fullName evidence="1">Acidic ribosomal protein P0 homolog</fullName>
    </alternativeName>
</protein>
<dbReference type="EMBL" id="CP001402">
    <property type="protein sequence ID" value="ACR42413.1"/>
    <property type="molecule type" value="Genomic_DNA"/>
</dbReference>
<dbReference type="RefSeq" id="WP_012711738.1">
    <property type="nucleotide sequence ID" value="NC_012726.1"/>
</dbReference>
<dbReference type="SMR" id="C4KIJ9"/>
<dbReference type="GeneID" id="84062114"/>
<dbReference type="KEGG" id="sid:M164_1810"/>
<dbReference type="HOGENOM" id="CLU_053173_0_0_2"/>
<dbReference type="Proteomes" id="UP000001479">
    <property type="component" value="Chromosome"/>
</dbReference>
<dbReference type="GO" id="GO:0022625">
    <property type="term" value="C:cytosolic large ribosomal subunit"/>
    <property type="evidence" value="ECO:0007669"/>
    <property type="project" value="TreeGrafter"/>
</dbReference>
<dbReference type="GO" id="GO:0070180">
    <property type="term" value="F:large ribosomal subunit rRNA binding"/>
    <property type="evidence" value="ECO:0007669"/>
    <property type="project" value="UniProtKB-UniRule"/>
</dbReference>
<dbReference type="GO" id="GO:0003735">
    <property type="term" value="F:structural constituent of ribosome"/>
    <property type="evidence" value="ECO:0007669"/>
    <property type="project" value="TreeGrafter"/>
</dbReference>
<dbReference type="GO" id="GO:0002181">
    <property type="term" value="P:cytoplasmic translation"/>
    <property type="evidence" value="ECO:0007669"/>
    <property type="project" value="TreeGrafter"/>
</dbReference>
<dbReference type="GO" id="GO:0000027">
    <property type="term" value="P:ribosomal large subunit assembly"/>
    <property type="evidence" value="ECO:0007669"/>
    <property type="project" value="TreeGrafter"/>
</dbReference>
<dbReference type="CDD" id="cd05795">
    <property type="entry name" value="Ribosomal_P0_L10e"/>
    <property type="match status" value="1"/>
</dbReference>
<dbReference type="FunFam" id="3.90.105.20:FF:000001">
    <property type="entry name" value="60S acidic ribosomal protein P0"/>
    <property type="match status" value="1"/>
</dbReference>
<dbReference type="Gene3D" id="3.30.70.1730">
    <property type="match status" value="1"/>
</dbReference>
<dbReference type="Gene3D" id="3.90.105.20">
    <property type="match status" value="1"/>
</dbReference>
<dbReference type="Gene3D" id="6.10.140.760">
    <property type="match status" value="1"/>
</dbReference>
<dbReference type="HAMAP" id="MF_00280">
    <property type="entry name" value="Ribosomal_uL10_arch"/>
    <property type="match status" value="1"/>
</dbReference>
<dbReference type="InterPro" id="IPR050323">
    <property type="entry name" value="Ribosomal_protein_uL10"/>
</dbReference>
<dbReference type="InterPro" id="IPR001790">
    <property type="entry name" value="Ribosomal_uL10"/>
</dbReference>
<dbReference type="InterPro" id="IPR040637">
    <property type="entry name" value="Ribosomal_uL10-like_insert"/>
</dbReference>
<dbReference type="InterPro" id="IPR043164">
    <property type="entry name" value="Ribosomal_uL10-like_insert_sf"/>
</dbReference>
<dbReference type="InterPro" id="IPR043141">
    <property type="entry name" value="Ribosomal_uL10-like_sf"/>
</dbReference>
<dbReference type="InterPro" id="IPR022909">
    <property type="entry name" value="Ribosomal_uL10_arc"/>
</dbReference>
<dbReference type="NCBIfam" id="NF003095">
    <property type="entry name" value="PRK04019.1-1"/>
    <property type="match status" value="1"/>
</dbReference>
<dbReference type="PANTHER" id="PTHR45699">
    <property type="entry name" value="60S ACIDIC RIBOSOMAL PROTEIN P0"/>
    <property type="match status" value="1"/>
</dbReference>
<dbReference type="PANTHER" id="PTHR45699:SF3">
    <property type="entry name" value="LARGE RIBOSOMAL SUBUNIT PROTEIN UL10"/>
    <property type="match status" value="1"/>
</dbReference>
<dbReference type="Pfam" id="PF00466">
    <property type="entry name" value="Ribosomal_L10"/>
    <property type="match status" value="1"/>
</dbReference>
<dbReference type="Pfam" id="PF17777">
    <property type="entry name" value="RL10P_insert"/>
    <property type="match status" value="1"/>
</dbReference>
<dbReference type="SUPFAM" id="SSF160369">
    <property type="entry name" value="Ribosomal protein L10-like"/>
    <property type="match status" value="1"/>
</dbReference>